<protein>
    <recommendedName>
        <fullName>S-adenosylmethionine synthase 3</fullName>
        <shortName>AdoMet synthase 3</shortName>
        <ecNumber evidence="5">2.5.1.6</ecNumber>
    </recommendedName>
    <alternativeName>
        <fullName>Methionine adenosyltransferase 3</fullName>
        <shortName>MAT 3</shortName>
    </alternativeName>
</protein>
<evidence type="ECO:0000250" key="1"/>
<evidence type="ECO:0000250" key="2">
    <source>
        <dbReference type="UniProtKB" id="P0A817"/>
    </source>
</evidence>
<evidence type="ECO:0000250" key="3">
    <source>
        <dbReference type="UniProtKB" id="P13444"/>
    </source>
</evidence>
<evidence type="ECO:0000250" key="4">
    <source>
        <dbReference type="UniProtKB" id="Q00266"/>
    </source>
</evidence>
<evidence type="ECO:0000250" key="5">
    <source>
        <dbReference type="UniProtKB" id="Q96551"/>
    </source>
</evidence>
<evidence type="ECO:0000269" key="6">
    <source ref="1"/>
</evidence>
<evidence type="ECO:0000305" key="7"/>
<feature type="chain" id="PRO_0000363012" description="S-adenosylmethionine synthase 3">
    <location>
        <begin position="1"/>
        <end position="393"/>
    </location>
</feature>
<feature type="binding site" evidence="3">
    <location>
        <position position="9"/>
    </location>
    <ligand>
        <name>Mg(2+)</name>
        <dbReference type="ChEBI" id="CHEBI:18420"/>
    </ligand>
</feature>
<feature type="binding site" description="in other chain" evidence="4">
    <location>
        <position position="15"/>
    </location>
    <ligand>
        <name>ATP</name>
        <dbReference type="ChEBI" id="CHEBI:30616"/>
        <note>ligand shared between two neighboring subunits</note>
    </ligand>
</feature>
<feature type="binding site" evidence="2">
    <location>
        <position position="43"/>
    </location>
    <ligand>
        <name>K(+)</name>
        <dbReference type="ChEBI" id="CHEBI:29103"/>
    </ligand>
</feature>
<feature type="binding site" description="in other chain" evidence="2">
    <location>
        <position position="56"/>
    </location>
    <ligand>
        <name>L-methionine</name>
        <dbReference type="ChEBI" id="CHEBI:57844"/>
        <note>ligand shared between two neighboring subunits</note>
    </ligand>
</feature>
<feature type="binding site" description="in other chain" evidence="2">
    <location>
        <position position="99"/>
    </location>
    <ligand>
        <name>L-methionine</name>
        <dbReference type="ChEBI" id="CHEBI:57844"/>
        <note>ligand shared between two neighboring subunits</note>
    </ligand>
</feature>
<feature type="binding site" description="in other chain" evidence="4">
    <location>
        <begin position="167"/>
        <end position="169"/>
    </location>
    <ligand>
        <name>ATP</name>
        <dbReference type="ChEBI" id="CHEBI:30616"/>
        <note>ligand shared between two neighboring subunits</note>
    </ligand>
</feature>
<feature type="binding site" description="in other chain" evidence="4">
    <location>
        <begin position="235"/>
        <end position="238"/>
    </location>
    <ligand>
        <name>ATP</name>
        <dbReference type="ChEBI" id="CHEBI:30616"/>
        <note>ligand shared between two neighboring subunits</note>
    </ligand>
</feature>
<feature type="binding site" description="in other chain" evidence="4">
    <location>
        <position position="246"/>
    </location>
    <ligand>
        <name>ATP</name>
        <dbReference type="ChEBI" id="CHEBI:30616"/>
        <note>ligand shared between two neighboring subunits</note>
    </ligand>
</feature>
<feature type="binding site" evidence="2">
    <location>
        <position position="246"/>
    </location>
    <ligand>
        <name>L-methionine</name>
        <dbReference type="ChEBI" id="CHEBI:57844"/>
        <note>ligand shared between two neighboring subunits</note>
    </ligand>
</feature>
<feature type="binding site" description="in other chain" evidence="2">
    <location>
        <begin position="252"/>
        <end position="253"/>
    </location>
    <ligand>
        <name>ATP</name>
        <dbReference type="ChEBI" id="CHEBI:30616"/>
        <note>ligand shared between two neighboring subunits</note>
    </ligand>
</feature>
<feature type="binding site" evidence="2">
    <location>
        <position position="269"/>
    </location>
    <ligand>
        <name>ATP</name>
        <dbReference type="ChEBI" id="CHEBI:30616"/>
        <note>ligand shared between two neighboring subunits</note>
    </ligand>
</feature>
<feature type="binding site" evidence="2">
    <location>
        <position position="273"/>
    </location>
    <ligand>
        <name>ATP</name>
        <dbReference type="ChEBI" id="CHEBI:30616"/>
        <note>ligand shared between two neighboring subunits</note>
    </ligand>
</feature>
<feature type="binding site" evidence="3">
    <location>
        <position position="277"/>
    </location>
    <ligand>
        <name>ATP</name>
        <dbReference type="ChEBI" id="CHEBI:30616"/>
        <note>ligand shared between two neighboring subunits</note>
    </ligand>
</feature>
<feature type="binding site" description="in other chain" evidence="2">
    <location>
        <position position="277"/>
    </location>
    <ligand>
        <name>L-methionine</name>
        <dbReference type="ChEBI" id="CHEBI:57844"/>
        <note>ligand shared between two neighboring subunits</note>
    </ligand>
</feature>
<gene>
    <name type="primary">MSAMS3</name>
</gene>
<sequence>METFLFTSESVNEGHPDKLCDQISDAVLDACLEQDPDSKVACETCTKTNMVMVFGEITTKATVDYEKIVRDTCRSIGFISDDVGLDADKCKVLVNIEQQSPDIAQGVHGHFTKRPEDIGAGDQGHMFGYATDETPELMPLSHVLATKIGAKLTEVRKNGTCRWLRPNGKTQVTGEYYNDNGAMVPVRVHTVLISTQHDETVTNDEIARDLKEHVIKPIIPEKYLDDKTIFHLNPSGRFVIGGPHGDAGLTGRKIIIDTYGGWGAHGGGAFSGKDPTKVDRSGAYIVRQAAKSVVANGMARRALVQVSYAIGVPEPLSVFVDTYGTGLIPDKEILKIVKESFDFRPGMMTINLDLKRGGNGRFLKTAAYGHFGRDDPDFTWEVVKPLKWDKPQA</sequence>
<name>METK3_BRAJU</name>
<keyword id="KW-0067">ATP-binding</keyword>
<keyword id="KW-0170">Cobalt</keyword>
<keyword id="KW-0963">Cytoplasm</keyword>
<keyword id="KW-0460">Magnesium</keyword>
<keyword id="KW-0479">Metal-binding</keyword>
<keyword id="KW-0547">Nucleotide-binding</keyword>
<keyword id="KW-0554">One-carbon metabolism</keyword>
<keyword id="KW-0630">Potassium</keyword>
<keyword id="KW-0808">Transferase</keyword>
<proteinExistence type="evidence at transcript level"/>
<accession>Q94FA6</accession>
<reference key="1">
    <citation type="journal article" date="2002" name="Physiol. Plantarum">
        <title>Characterization of S-adenosylmethionine synthetase genes and its expression is associated with ethylene synthesis in mustard (Brassica juncea).</title>
        <authorList>
            <person name="Lim C.-C."/>
            <person name="Liu J.-Z."/>
            <person name="Pua E.-C."/>
        </authorList>
    </citation>
    <scope>NUCLEOTIDE SEQUENCE [MRNA]</scope>
    <scope>INDUCTION</scope>
    <scope>TISSUE SPECIFICITY</scope>
</reference>
<dbReference type="EC" id="2.5.1.6" evidence="5"/>
<dbReference type="EMBL" id="AF379013">
    <property type="protein sequence ID" value="AAK71233.1"/>
    <property type="molecule type" value="mRNA"/>
</dbReference>
<dbReference type="SMR" id="Q94FA6"/>
<dbReference type="UniPathway" id="UPA00315">
    <property type="reaction ID" value="UER00080"/>
</dbReference>
<dbReference type="GO" id="GO:0005737">
    <property type="term" value="C:cytoplasm"/>
    <property type="evidence" value="ECO:0007669"/>
    <property type="project" value="UniProtKB-SubCell"/>
</dbReference>
<dbReference type="GO" id="GO:0005524">
    <property type="term" value="F:ATP binding"/>
    <property type="evidence" value="ECO:0007669"/>
    <property type="project" value="UniProtKB-KW"/>
</dbReference>
<dbReference type="GO" id="GO:0046872">
    <property type="term" value="F:metal ion binding"/>
    <property type="evidence" value="ECO:0007669"/>
    <property type="project" value="UniProtKB-KW"/>
</dbReference>
<dbReference type="GO" id="GO:0004478">
    <property type="term" value="F:methionine adenosyltransferase activity"/>
    <property type="evidence" value="ECO:0007669"/>
    <property type="project" value="UniProtKB-EC"/>
</dbReference>
<dbReference type="GO" id="GO:0006730">
    <property type="term" value="P:one-carbon metabolic process"/>
    <property type="evidence" value="ECO:0007669"/>
    <property type="project" value="UniProtKB-KW"/>
</dbReference>
<dbReference type="GO" id="GO:0006556">
    <property type="term" value="P:S-adenosylmethionine biosynthetic process"/>
    <property type="evidence" value="ECO:0007669"/>
    <property type="project" value="UniProtKB-UniPathway"/>
</dbReference>
<dbReference type="CDD" id="cd18079">
    <property type="entry name" value="S-AdoMet_synt"/>
    <property type="match status" value="1"/>
</dbReference>
<dbReference type="FunFam" id="3.30.300.10:FF:000003">
    <property type="entry name" value="S-adenosylmethionine synthase"/>
    <property type="match status" value="1"/>
</dbReference>
<dbReference type="FunFam" id="3.30.300.10:FF:000004">
    <property type="entry name" value="S-adenosylmethionine synthase"/>
    <property type="match status" value="1"/>
</dbReference>
<dbReference type="FunFam" id="3.30.300.10:FF:000011">
    <property type="entry name" value="S-adenosylmethionine synthase"/>
    <property type="match status" value="1"/>
</dbReference>
<dbReference type="FunFam" id="3.30.300.10:FF:000021">
    <property type="entry name" value="S-adenosylmethionine synthetase 1"/>
    <property type="match status" value="1"/>
</dbReference>
<dbReference type="Gene3D" id="3.30.300.10">
    <property type="match status" value="3"/>
</dbReference>
<dbReference type="HAMAP" id="MF_00086">
    <property type="entry name" value="S_AdoMet_synth1"/>
    <property type="match status" value="1"/>
</dbReference>
<dbReference type="InterPro" id="IPR022631">
    <property type="entry name" value="ADOMET_SYNTHASE_CS"/>
</dbReference>
<dbReference type="InterPro" id="IPR022630">
    <property type="entry name" value="S-AdoMet_synt_C"/>
</dbReference>
<dbReference type="InterPro" id="IPR022629">
    <property type="entry name" value="S-AdoMet_synt_central"/>
</dbReference>
<dbReference type="InterPro" id="IPR022628">
    <property type="entry name" value="S-AdoMet_synt_N"/>
</dbReference>
<dbReference type="InterPro" id="IPR002133">
    <property type="entry name" value="S-AdoMet_synthetase"/>
</dbReference>
<dbReference type="InterPro" id="IPR022636">
    <property type="entry name" value="S-AdoMet_synthetase_sfam"/>
</dbReference>
<dbReference type="NCBIfam" id="TIGR01034">
    <property type="entry name" value="metK"/>
    <property type="match status" value="1"/>
</dbReference>
<dbReference type="PANTHER" id="PTHR11964">
    <property type="entry name" value="S-ADENOSYLMETHIONINE SYNTHETASE"/>
    <property type="match status" value="1"/>
</dbReference>
<dbReference type="Pfam" id="PF02773">
    <property type="entry name" value="S-AdoMet_synt_C"/>
    <property type="match status" value="1"/>
</dbReference>
<dbReference type="Pfam" id="PF02772">
    <property type="entry name" value="S-AdoMet_synt_M"/>
    <property type="match status" value="1"/>
</dbReference>
<dbReference type="Pfam" id="PF00438">
    <property type="entry name" value="S-AdoMet_synt_N"/>
    <property type="match status" value="1"/>
</dbReference>
<dbReference type="PIRSF" id="PIRSF000497">
    <property type="entry name" value="MAT"/>
    <property type="match status" value="1"/>
</dbReference>
<dbReference type="SUPFAM" id="SSF55973">
    <property type="entry name" value="S-adenosylmethionine synthetase"/>
    <property type="match status" value="3"/>
</dbReference>
<dbReference type="PROSITE" id="PS00376">
    <property type="entry name" value="ADOMET_SYNTHASE_1"/>
    <property type="match status" value="1"/>
</dbReference>
<dbReference type="PROSITE" id="PS00377">
    <property type="entry name" value="ADOMET_SYNTHASE_2"/>
    <property type="match status" value="1"/>
</dbReference>
<comment type="function">
    <text evidence="5">Catalyzes the formation of S-adenosylmethionine from methionine and ATP. The reaction comprises two steps that are both catalyzed by the same enzyme: formation of S-adenosylmethionine (AdoMet) and triphosphate, and subsequent hydrolysis of the triphosphate.</text>
</comment>
<comment type="catalytic activity">
    <reaction evidence="5">
        <text>L-methionine + ATP + H2O = S-adenosyl-L-methionine + phosphate + diphosphate</text>
        <dbReference type="Rhea" id="RHEA:21080"/>
        <dbReference type="ChEBI" id="CHEBI:15377"/>
        <dbReference type="ChEBI" id="CHEBI:30616"/>
        <dbReference type="ChEBI" id="CHEBI:33019"/>
        <dbReference type="ChEBI" id="CHEBI:43474"/>
        <dbReference type="ChEBI" id="CHEBI:57844"/>
        <dbReference type="ChEBI" id="CHEBI:59789"/>
        <dbReference type="EC" id="2.5.1.6"/>
    </reaction>
</comment>
<comment type="cofactor">
    <cofactor evidence="5">
        <name>Mn(2+)</name>
        <dbReference type="ChEBI" id="CHEBI:29035"/>
    </cofactor>
    <cofactor evidence="5">
        <name>Mg(2+)</name>
        <dbReference type="ChEBI" id="CHEBI:18420"/>
    </cofactor>
    <cofactor evidence="5">
        <name>Co(2+)</name>
        <dbReference type="ChEBI" id="CHEBI:48828"/>
    </cofactor>
    <text evidence="3 5">Binds 2 divalent ions per subunit. The metal ions interact primarily with the substrate (By similarity). Can utilize magnesium, manganese or cobalt (in vitro) (By similarity).</text>
</comment>
<comment type="cofactor">
    <cofactor evidence="5">
        <name>K(+)</name>
        <dbReference type="ChEBI" id="CHEBI:29103"/>
    </cofactor>
    <text evidence="3">Binds 1 potassium ion per subunit. The potassium ion interacts primarily with the substrate (By similarity).</text>
</comment>
<comment type="pathway">
    <text evidence="5">Amino-acid biosynthesis; S-adenosyl-L-methionine biosynthesis; S-adenosyl-L-methionine from L-methionine: step 1/1.</text>
</comment>
<comment type="subunit">
    <text evidence="1">Homotetramer.</text>
</comment>
<comment type="subcellular location">
    <subcellularLocation>
        <location evidence="1">Cytoplasm</location>
    </subcellularLocation>
</comment>
<comment type="tissue specificity">
    <text evidence="6">Mostly expressed in flowers, seedpods and roots, and, to a lower extent, in stems and leaves.</text>
</comment>
<comment type="induction">
    <text evidence="6">By ethylene, polyamines (PAs: putrescine, spermidine and spermine), methylglyoxal (bis-guanyhydrazone) (MGBG), salt, and AgNO(3).</text>
</comment>
<comment type="similarity">
    <text evidence="7">Belongs to the AdoMet synthase family.</text>
</comment>
<organism>
    <name type="scientific">Brassica juncea</name>
    <name type="common">Indian mustard</name>
    <name type="synonym">Sinapis juncea</name>
    <dbReference type="NCBI Taxonomy" id="3707"/>
    <lineage>
        <taxon>Eukaryota</taxon>
        <taxon>Viridiplantae</taxon>
        <taxon>Streptophyta</taxon>
        <taxon>Embryophyta</taxon>
        <taxon>Tracheophyta</taxon>
        <taxon>Spermatophyta</taxon>
        <taxon>Magnoliopsida</taxon>
        <taxon>eudicotyledons</taxon>
        <taxon>Gunneridae</taxon>
        <taxon>Pentapetalae</taxon>
        <taxon>rosids</taxon>
        <taxon>malvids</taxon>
        <taxon>Brassicales</taxon>
        <taxon>Brassicaceae</taxon>
        <taxon>Brassiceae</taxon>
        <taxon>Brassica</taxon>
    </lineage>
</organism>